<proteinExistence type="inferred from homology"/>
<keyword id="KW-0963">Cytoplasm</keyword>
<keyword id="KW-0251">Elongation factor</keyword>
<keyword id="KW-0342">GTP-binding</keyword>
<keyword id="KW-0547">Nucleotide-binding</keyword>
<keyword id="KW-0648">Protein biosynthesis</keyword>
<keyword id="KW-1185">Reference proteome</keyword>
<organism>
    <name type="scientific">Frankia alni (strain DSM 45986 / CECT 9034 / ACN14a)</name>
    <dbReference type="NCBI Taxonomy" id="326424"/>
    <lineage>
        <taxon>Bacteria</taxon>
        <taxon>Bacillati</taxon>
        <taxon>Actinomycetota</taxon>
        <taxon>Actinomycetes</taxon>
        <taxon>Frankiales</taxon>
        <taxon>Frankiaceae</taxon>
        <taxon>Frankia</taxon>
    </lineage>
</organism>
<feature type="chain" id="PRO_1000008824" description="Elongation factor G">
    <location>
        <begin position="1"/>
        <end position="698"/>
    </location>
</feature>
<feature type="domain" description="tr-type G">
    <location>
        <begin position="10"/>
        <end position="285"/>
    </location>
</feature>
<feature type="binding site" evidence="1">
    <location>
        <begin position="19"/>
        <end position="26"/>
    </location>
    <ligand>
        <name>GTP</name>
        <dbReference type="ChEBI" id="CHEBI:37565"/>
    </ligand>
</feature>
<feature type="binding site" evidence="1">
    <location>
        <begin position="83"/>
        <end position="87"/>
    </location>
    <ligand>
        <name>GTP</name>
        <dbReference type="ChEBI" id="CHEBI:37565"/>
    </ligand>
</feature>
<feature type="binding site" evidence="1">
    <location>
        <begin position="137"/>
        <end position="140"/>
    </location>
    <ligand>
        <name>GTP</name>
        <dbReference type="ChEBI" id="CHEBI:37565"/>
    </ligand>
</feature>
<dbReference type="EMBL" id="CT573213">
    <property type="protein sequence ID" value="CAJ59743.1"/>
    <property type="molecule type" value="Genomic_DNA"/>
</dbReference>
<dbReference type="RefSeq" id="WP_011602299.1">
    <property type="nucleotide sequence ID" value="NC_008278.1"/>
</dbReference>
<dbReference type="SMR" id="Q0RRS4"/>
<dbReference type="STRING" id="326424.FRAAL1078"/>
<dbReference type="KEGG" id="fal:FRAAL1078"/>
<dbReference type="eggNOG" id="COG0480">
    <property type="taxonomic scope" value="Bacteria"/>
</dbReference>
<dbReference type="HOGENOM" id="CLU_002794_4_1_11"/>
<dbReference type="OrthoDB" id="9801472at2"/>
<dbReference type="Proteomes" id="UP000000657">
    <property type="component" value="Chromosome"/>
</dbReference>
<dbReference type="GO" id="GO:0005737">
    <property type="term" value="C:cytoplasm"/>
    <property type="evidence" value="ECO:0007669"/>
    <property type="project" value="UniProtKB-SubCell"/>
</dbReference>
<dbReference type="GO" id="GO:0005525">
    <property type="term" value="F:GTP binding"/>
    <property type="evidence" value="ECO:0007669"/>
    <property type="project" value="UniProtKB-UniRule"/>
</dbReference>
<dbReference type="GO" id="GO:0003924">
    <property type="term" value="F:GTPase activity"/>
    <property type="evidence" value="ECO:0007669"/>
    <property type="project" value="InterPro"/>
</dbReference>
<dbReference type="GO" id="GO:0003746">
    <property type="term" value="F:translation elongation factor activity"/>
    <property type="evidence" value="ECO:0007669"/>
    <property type="project" value="UniProtKB-UniRule"/>
</dbReference>
<dbReference type="GO" id="GO:0032790">
    <property type="term" value="P:ribosome disassembly"/>
    <property type="evidence" value="ECO:0007669"/>
    <property type="project" value="TreeGrafter"/>
</dbReference>
<dbReference type="CDD" id="cd01886">
    <property type="entry name" value="EF-G"/>
    <property type="match status" value="1"/>
</dbReference>
<dbReference type="CDD" id="cd16262">
    <property type="entry name" value="EFG_III"/>
    <property type="match status" value="1"/>
</dbReference>
<dbReference type="CDD" id="cd01434">
    <property type="entry name" value="EFG_mtEFG1_IV"/>
    <property type="match status" value="1"/>
</dbReference>
<dbReference type="CDD" id="cd03713">
    <property type="entry name" value="EFG_mtEFG_C"/>
    <property type="match status" value="1"/>
</dbReference>
<dbReference type="CDD" id="cd04088">
    <property type="entry name" value="EFG_mtEFG_II"/>
    <property type="match status" value="1"/>
</dbReference>
<dbReference type="FunFam" id="2.40.30.10:FF:000006">
    <property type="entry name" value="Elongation factor G"/>
    <property type="match status" value="1"/>
</dbReference>
<dbReference type="FunFam" id="3.30.230.10:FF:000003">
    <property type="entry name" value="Elongation factor G"/>
    <property type="match status" value="1"/>
</dbReference>
<dbReference type="FunFam" id="3.30.70.240:FF:000001">
    <property type="entry name" value="Elongation factor G"/>
    <property type="match status" value="1"/>
</dbReference>
<dbReference type="FunFam" id="3.30.70.870:FF:000001">
    <property type="entry name" value="Elongation factor G"/>
    <property type="match status" value="1"/>
</dbReference>
<dbReference type="FunFam" id="3.40.50.300:FF:000029">
    <property type="entry name" value="Elongation factor G"/>
    <property type="match status" value="1"/>
</dbReference>
<dbReference type="Gene3D" id="3.30.230.10">
    <property type="match status" value="1"/>
</dbReference>
<dbReference type="Gene3D" id="3.30.70.240">
    <property type="match status" value="1"/>
</dbReference>
<dbReference type="Gene3D" id="3.30.70.870">
    <property type="entry name" value="Elongation Factor G (Translational Gtpase), domain 3"/>
    <property type="match status" value="1"/>
</dbReference>
<dbReference type="Gene3D" id="3.40.50.300">
    <property type="entry name" value="P-loop containing nucleotide triphosphate hydrolases"/>
    <property type="match status" value="1"/>
</dbReference>
<dbReference type="Gene3D" id="2.40.30.10">
    <property type="entry name" value="Translation factors"/>
    <property type="match status" value="1"/>
</dbReference>
<dbReference type="HAMAP" id="MF_00054_B">
    <property type="entry name" value="EF_G_EF_2_B"/>
    <property type="match status" value="1"/>
</dbReference>
<dbReference type="InterPro" id="IPR053905">
    <property type="entry name" value="EF-G-like_DII"/>
</dbReference>
<dbReference type="InterPro" id="IPR041095">
    <property type="entry name" value="EFG_II"/>
</dbReference>
<dbReference type="InterPro" id="IPR009022">
    <property type="entry name" value="EFG_III"/>
</dbReference>
<dbReference type="InterPro" id="IPR035647">
    <property type="entry name" value="EFG_III/V"/>
</dbReference>
<dbReference type="InterPro" id="IPR047872">
    <property type="entry name" value="EFG_IV"/>
</dbReference>
<dbReference type="InterPro" id="IPR035649">
    <property type="entry name" value="EFG_V"/>
</dbReference>
<dbReference type="InterPro" id="IPR000640">
    <property type="entry name" value="EFG_V-like"/>
</dbReference>
<dbReference type="InterPro" id="IPR031157">
    <property type="entry name" value="G_TR_CS"/>
</dbReference>
<dbReference type="InterPro" id="IPR027417">
    <property type="entry name" value="P-loop_NTPase"/>
</dbReference>
<dbReference type="InterPro" id="IPR020568">
    <property type="entry name" value="Ribosomal_Su5_D2-typ_SF"/>
</dbReference>
<dbReference type="InterPro" id="IPR014721">
    <property type="entry name" value="Ribsml_uS5_D2-typ_fold_subgr"/>
</dbReference>
<dbReference type="InterPro" id="IPR005225">
    <property type="entry name" value="Small_GTP-bd"/>
</dbReference>
<dbReference type="InterPro" id="IPR000795">
    <property type="entry name" value="T_Tr_GTP-bd_dom"/>
</dbReference>
<dbReference type="InterPro" id="IPR009000">
    <property type="entry name" value="Transl_B-barrel_sf"/>
</dbReference>
<dbReference type="InterPro" id="IPR004540">
    <property type="entry name" value="Transl_elong_EFG/EF2"/>
</dbReference>
<dbReference type="InterPro" id="IPR005517">
    <property type="entry name" value="Transl_elong_EFG/EF2_IV"/>
</dbReference>
<dbReference type="NCBIfam" id="TIGR00484">
    <property type="entry name" value="EF-G"/>
    <property type="match status" value="1"/>
</dbReference>
<dbReference type="NCBIfam" id="NF009379">
    <property type="entry name" value="PRK12740.1-3"/>
    <property type="match status" value="1"/>
</dbReference>
<dbReference type="NCBIfam" id="NF009381">
    <property type="entry name" value="PRK12740.1-5"/>
    <property type="match status" value="1"/>
</dbReference>
<dbReference type="NCBIfam" id="TIGR00231">
    <property type="entry name" value="small_GTP"/>
    <property type="match status" value="1"/>
</dbReference>
<dbReference type="PANTHER" id="PTHR43261:SF1">
    <property type="entry name" value="RIBOSOME-RELEASING FACTOR 2, MITOCHONDRIAL"/>
    <property type="match status" value="1"/>
</dbReference>
<dbReference type="PANTHER" id="PTHR43261">
    <property type="entry name" value="TRANSLATION ELONGATION FACTOR G-RELATED"/>
    <property type="match status" value="1"/>
</dbReference>
<dbReference type="Pfam" id="PF22042">
    <property type="entry name" value="EF-G_D2"/>
    <property type="match status" value="1"/>
</dbReference>
<dbReference type="Pfam" id="PF00679">
    <property type="entry name" value="EFG_C"/>
    <property type="match status" value="1"/>
</dbReference>
<dbReference type="Pfam" id="PF14492">
    <property type="entry name" value="EFG_III"/>
    <property type="match status" value="1"/>
</dbReference>
<dbReference type="Pfam" id="PF03764">
    <property type="entry name" value="EFG_IV"/>
    <property type="match status" value="1"/>
</dbReference>
<dbReference type="Pfam" id="PF00009">
    <property type="entry name" value="GTP_EFTU"/>
    <property type="match status" value="1"/>
</dbReference>
<dbReference type="PRINTS" id="PR00315">
    <property type="entry name" value="ELONGATNFCT"/>
</dbReference>
<dbReference type="SMART" id="SM00838">
    <property type="entry name" value="EFG_C"/>
    <property type="match status" value="1"/>
</dbReference>
<dbReference type="SMART" id="SM00889">
    <property type="entry name" value="EFG_IV"/>
    <property type="match status" value="1"/>
</dbReference>
<dbReference type="SUPFAM" id="SSF54980">
    <property type="entry name" value="EF-G C-terminal domain-like"/>
    <property type="match status" value="2"/>
</dbReference>
<dbReference type="SUPFAM" id="SSF52540">
    <property type="entry name" value="P-loop containing nucleoside triphosphate hydrolases"/>
    <property type="match status" value="1"/>
</dbReference>
<dbReference type="SUPFAM" id="SSF54211">
    <property type="entry name" value="Ribosomal protein S5 domain 2-like"/>
    <property type="match status" value="1"/>
</dbReference>
<dbReference type="SUPFAM" id="SSF50447">
    <property type="entry name" value="Translation proteins"/>
    <property type="match status" value="1"/>
</dbReference>
<dbReference type="PROSITE" id="PS00301">
    <property type="entry name" value="G_TR_1"/>
    <property type="match status" value="1"/>
</dbReference>
<dbReference type="PROSITE" id="PS51722">
    <property type="entry name" value="G_TR_2"/>
    <property type="match status" value="1"/>
</dbReference>
<evidence type="ECO:0000255" key="1">
    <source>
        <dbReference type="HAMAP-Rule" id="MF_00054"/>
    </source>
</evidence>
<sequence>MPSDAPSSLASTRNIGIMAHIDAGKTTTTERILFYTGVNYKIGEVHEGGATMDWMEQEQERGITITSAATTCIWRDHTINIIDTPGHVDFTVEVERSLRVLDGAVAVFDAVAGVEPQSETVWKQADRYNVPRIAFVNKMDRVGAEFHRCVDMMVERLDATPAVIQLPWGVESDFRGVIDLIRMKGLLWKSEDKGASYEVVDIPRDHLEAAQEWRDKLLETVAENDDELMELYLEGEEPSEEQLMAGLRRGTLASKINPVLCGSAFKNKGVQPMLDAVVDFLPNPLDIGATIGHSVSDEDAEVRREPSEDEPFSALAFKIMSDPYVGKLTYIRVYSGRLTGGSPVLNSTKDRKERIGRILQMHANHREDRDGVGAGQIVAVVGLKNTTTGDTLCDPNAPVILESMTFPAPVIHVAIEPKTKADQQKLGTAIQRLAEEDPTFQVRTDEETGQTIIAGMGELHLDVLVDRMRREYGVEANVGKPQVAYRETIRRKVEKVDYTHKKQTGGSGQYARVIINLEPSGGDGGGYEFENKVTGGRIPREYIPSVDAGCQEAMEFGVLAGYPLVDVKVTLLDGQYHDVDSSELAFKIAGSMAFKDAARKADPVLLEPLMAVEVTTPEDHMGDVIGDLNSRRGQIQAMEERGGSRIVRAQVPLSEMFGYVGDLRSKTSGRASYSMQFDSYAEVPGNVAKEIIAKARGE</sequence>
<name>EFG_FRAAA</name>
<comment type="function">
    <text evidence="1">Catalyzes the GTP-dependent ribosomal translocation step during translation elongation. During this step, the ribosome changes from the pre-translocational (PRE) to the post-translocational (POST) state as the newly formed A-site-bound peptidyl-tRNA and P-site-bound deacylated tRNA move to the P and E sites, respectively. Catalyzes the coordinated movement of the two tRNA molecules, the mRNA and conformational changes in the ribosome.</text>
</comment>
<comment type="subcellular location">
    <subcellularLocation>
        <location evidence="1">Cytoplasm</location>
    </subcellularLocation>
</comment>
<comment type="similarity">
    <text evidence="1">Belongs to the TRAFAC class translation factor GTPase superfamily. Classic translation factor GTPase family. EF-G/EF-2 subfamily.</text>
</comment>
<reference key="1">
    <citation type="journal article" date="2007" name="Genome Res.">
        <title>Genome characteristics of facultatively symbiotic Frankia sp. strains reflect host range and host plant biogeography.</title>
        <authorList>
            <person name="Normand P."/>
            <person name="Lapierre P."/>
            <person name="Tisa L.S."/>
            <person name="Gogarten J.P."/>
            <person name="Alloisio N."/>
            <person name="Bagnarol E."/>
            <person name="Bassi C.A."/>
            <person name="Berry A.M."/>
            <person name="Bickhart D.M."/>
            <person name="Choisne N."/>
            <person name="Couloux A."/>
            <person name="Cournoyer B."/>
            <person name="Cruveiller S."/>
            <person name="Daubin V."/>
            <person name="Demange N."/>
            <person name="Francino M.P."/>
            <person name="Goltsman E."/>
            <person name="Huang Y."/>
            <person name="Kopp O.R."/>
            <person name="Labarre L."/>
            <person name="Lapidus A."/>
            <person name="Lavire C."/>
            <person name="Marechal J."/>
            <person name="Martinez M."/>
            <person name="Mastronunzio J.E."/>
            <person name="Mullin B.C."/>
            <person name="Niemann J."/>
            <person name="Pujic P."/>
            <person name="Rawnsley T."/>
            <person name="Rouy Z."/>
            <person name="Schenowitz C."/>
            <person name="Sellstedt A."/>
            <person name="Tavares F."/>
            <person name="Tomkins J.P."/>
            <person name="Vallenet D."/>
            <person name="Valverde C."/>
            <person name="Wall L.G."/>
            <person name="Wang Y."/>
            <person name="Medigue C."/>
            <person name="Benson D.R."/>
        </authorList>
    </citation>
    <scope>NUCLEOTIDE SEQUENCE [LARGE SCALE GENOMIC DNA]</scope>
    <source>
        <strain>DSM 45986 / CECT 9034 / ACN14a</strain>
    </source>
</reference>
<accession>Q0RRS4</accession>
<protein>
    <recommendedName>
        <fullName evidence="1">Elongation factor G</fullName>
        <shortName evidence="1">EF-G</shortName>
    </recommendedName>
</protein>
<gene>
    <name evidence="1" type="primary">fusA</name>
    <name type="ordered locus">FRAAL1078</name>
</gene>